<proteinExistence type="evidence at transcript level"/>
<organism>
    <name type="scientific">Rattus norvegicus</name>
    <name type="common">Rat</name>
    <dbReference type="NCBI Taxonomy" id="10116"/>
    <lineage>
        <taxon>Eukaryota</taxon>
        <taxon>Metazoa</taxon>
        <taxon>Chordata</taxon>
        <taxon>Craniata</taxon>
        <taxon>Vertebrata</taxon>
        <taxon>Euteleostomi</taxon>
        <taxon>Mammalia</taxon>
        <taxon>Eutheria</taxon>
        <taxon>Euarchontoglires</taxon>
        <taxon>Glires</taxon>
        <taxon>Rodentia</taxon>
        <taxon>Myomorpha</taxon>
        <taxon>Muroidea</taxon>
        <taxon>Muridae</taxon>
        <taxon>Murinae</taxon>
        <taxon>Rattus</taxon>
    </lineage>
</organism>
<feature type="chain" id="PRO_0000182926" description="Deoxyuridine 5'-triphosphate nucleotidohydrolase">
    <location>
        <begin position="1"/>
        <end position="205"/>
    </location>
</feature>
<feature type="binding site" evidence="1">
    <location>
        <begin position="126"/>
        <end position="128"/>
    </location>
    <ligand>
        <name>substrate</name>
    </ligand>
</feature>
<feature type="binding site" evidence="1">
    <location>
        <begin position="140"/>
        <end position="143"/>
    </location>
    <ligand>
        <name>substrate</name>
    </ligand>
</feature>
<feature type="binding site" evidence="1">
    <location>
        <position position="151"/>
    </location>
    <ligand>
        <name>substrate</name>
    </ligand>
</feature>
<feature type="binding site" evidence="1">
    <location>
        <begin position="199"/>
        <end position="200"/>
    </location>
    <ligand>
        <name>substrate</name>
    </ligand>
</feature>
<feature type="modified residue" description="Phosphoserine" evidence="1">
    <location>
        <position position="54"/>
    </location>
</feature>
<dbReference type="EC" id="3.6.1.23" evidence="1"/>
<dbReference type="EMBL" id="U64030">
    <property type="protein sequence ID" value="AAC34734.2"/>
    <property type="molecule type" value="mRNA"/>
</dbReference>
<dbReference type="PIR" id="T10819">
    <property type="entry name" value="T10819"/>
</dbReference>
<dbReference type="RefSeq" id="NP_001035361.1">
    <property type="nucleotide sequence ID" value="NM_001040271.1"/>
</dbReference>
<dbReference type="RefSeq" id="NP_446044.1">
    <property type="nucleotide sequence ID" value="NM_053592.3"/>
</dbReference>
<dbReference type="SMR" id="P70583"/>
<dbReference type="BioGRID" id="269088">
    <property type="interactions" value="4"/>
</dbReference>
<dbReference type="FunCoup" id="P70583">
    <property type="interactions" value="2566"/>
</dbReference>
<dbReference type="STRING" id="10116.ENSRNOP00000009549"/>
<dbReference type="iPTMnet" id="P70583"/>
<dbReference type="PhosphoSitePlus" id="P70583"/>
<dbReference type="jPOST" id="P70583"/>
<dbReference type="PaxDb" id="10116-ENSRNOP00000009549"/>
<dbReference type="Ensembl" id="ENSRNOT00000009549.3">
    <property type="protein sequence ID" value="ENSRNOP00000009549.1"/>
    <property type="gene ID" value="ENSRNOG00000007221.3"/>
</dbReference>
<dbReference type="GeneID" id="497778"/>
<dbReference type="KEGG" id="rno:497778"/>
<dbReference type="UCSC" id="RGD:620849">
    <property type="organism name" value="rat"/>
</dbReference>
<dbReference type="AGR" id="RGD:620849"/>
<dbReference type="CTD" id="1854"/>
<dbReference type="RGD" id="620849">
    <property type="gene designation" value="Dut"/>
</dbReference>
<dbReference type="eggNOG" id="KOG3370">
    <property type="taxonomic scope" value="Eukaryota"/>
</dbReference>
<dbReference type="GeneTree" id="ENSGT00390000018390"/>
<dbReference type="HOGENOM" id="CLU_068508_2_0_1"/>
<dbReference type="InParanoid" id="P70583"/>
<dbReference type="OMA" id="GREFHTQ"/>
<dbReference type="OrthoDB" id="419889at2759"/>
<dbReference type="PhylomeDB" id="P70583"/>
<dbReference type="TreeFam" id="TF105416"/>
<dbReference type="Reactome" id="R-RNO-499943">
    <property type="pathway name" value="Interconversion of nucleotide di- and triphosphates"/>
</dbReference>
<dbReference type="UniPathway" id="UPA00610">
    <property type="reaction ID" value="UER00666"/>
</dbReference>
<dbReference type="PRO" id="PR:P70583"/>
<dbReference type="Proteomes" id="UP000002494">
    <property type="component" value="Chromosome 3"/>
</dbReference>
<dbReference type="Bgee" id="ENSRNOG00000007221">
    <property type="expression patterns" value="Expressed in thymus and 19 other cell types or tissues"/>
</dbReference>
<dbReference type="GO" id="GO:0005737">
    <property type="term" value="C:cytoplasm"/>
    <property type="evidence" value="ECO:0007669"/>
    <property type="project" value="UniProtKB-SubCell"/>
</dbReference>
<dbReference type="GO" id="GO:0005654">
    <property type="term" value="C:nucleoplasm"/>
    <property type="evidence" value="ECO:0007669"/>
    <property type="project" value="Ensembl"/>
</dbReference>
<dbReference type="GO" id="GO:0005634">
    <property type="term" value="C:nucleus"/>
    <property type="evidence" value="ECO:0000266"/>
    <property type="project" value="RGD"/>
</dbReference>
<dbReference type="GO" id="GO:0004170">
    <property type="term" value="F:dUTP diphosphatase activity"/>
    <property type="evidence" value="ECO:0000314"/>
    <property type="project" value="RGD"/>
</dbReference>
<dbReference type="GO" id="GO:0042802">
    <property type="term" value="F:identical protein binding"/>
    <property type="evidence" value="ECO:0000353"/>
    <property type="project" value="RGD"/>
</dbReference>
<dbReference type="GO" id="GO:0000287">
    <property type="term" value="F:magnesium ion binding"/>
    <property type="evidence" value="ECO:0000318"/>
    <property type="project" value="GO_Central"/>
</dbReference>
<dbReference type="GO" id="GO:0042975">
    <property type="term" value="F:peroxisome proliferator activated receptor binding"/>
    <property type="evidence" value="ECO:0000353"/>
    <property type="project" value="RGD"/>
</dbReference>
<dbReference type="GO" id="GO:0032556">
    <property type="term" value="F:pyrimidine deoxyribonucleotide binding"/>
    <property type="evidence" value="ECO:0000314"/>
    <property type="project" value="RGD"/>
</dbReference>
<dbReference type="GO" id="GO:0030547">
    <property type="term" value="F:signaling receptor inhibitor activity"/>
    <property type="evidence" value="ECO:0000314"/>
    <property type="project" value="RGD"/>
</dbReference>
<dbReference type="GO" id="GO:0006231">
    <property type="term" value="P:dTMP biosynthetic process"/>
    <property type="evidence" value="ECO:0000266"/>
    <property type="project" value="RGD"/>
</dbReference>
<dbReference type="GO" id="GO:0006226">
    <property type="term" value="P:dUMP biosynthetic process"/>
    <property type="evidence" value="ECO:0000314"/>
    <property type="project" value="RGD"/>
</dbReference>
<dbReference type="GO" id="GO:0046081">
    <property type="term" value="P:dUTP catabolic process"/>
    <property type="evidence" value="ECO:0000314"/>
    <property type="project" value="RGD"/>
</dbReference>
<dbReference type="GO" id="GO:0001889">
    <property type="term" value="P:liver development"/>
    <property type="evidence" value="ECO:0000270"/>
    <property type="project" value="RGD"/>
</dbReference>
<dbReference type="GO" id="GO:0043254">
    <property type="term" value="P:regulation of protein-containing complex assembly"/>
    <property type="evidence" value="ECO:0000314"/>
    <property type="project" value="RGD"/>
</dbReference>
<dbReference type="CDD" id="cd07557">
    <property type="entry name" value="trimeric_dUTPase"/>
    <property type="match status" value="1"/>
</dbReference>
<dbReference type="FunFam" id="2.70.40.10:FF:000004">
    <property type="entry name" value="Deoxyuridine triphosphatase"/>
    <property type="match status" value="1"/>
</dbReference>
<dbReference type="Gene3D" id="2.70.40.10">
    <property type="match status" value="1"/>
</dbReference>
<dbReference type="InterPro" id="IPR008181">
    <property type="entry name" value="dUTPase"/>
</dbReference>
<dbReference type="InterPro" id="IPR029054">
    <property type="entry name" value="dUTPase-like"/>
</dbReference>
<dbReference type="InterPro" id="IPR036157">
    <property type="entry name" value="dUTPase-like_sf"/>
</dbReference>
<dbReference type="InterPro" id="IPR033704">
    <property type="entry name" value="dUTPase_trimeric"/>
</dbReference>
<dbReference type="NCBIfam" id="TIGR00576">
    <property type="entry name" value="dut"/>
    <property type="match status" value="1"/>
</dbReference>
<dbReference type="NCBIfam" id="NF001862">
    <property type="entry name" value="PRK00601.1"/>
    <property type="match status" value="1"/>
</dbReference>
<dbReference type="PANTHER" id="PTHR11241">
    <property type="entry name" value="DEOXYURIDINE 5'-TRIPHOSPHATE NUCLEOTIDOHYDROLASE"/>
    <property type="match status" value="1"/>
</dbReference>
<dbReference type="PANTHER" id="PTHR11241:SF0">
    <property type="entry name" value="DEOXYURIDINE 5'-TRIPHOSPHATE NUCLEOTIDOHYDROLASE"/>
    <property type="match status" value="1"/>
</dbReference>
<dbReference type="Pfam" id="PF00692">
    <property type="entry name" value="dUTPase"/>
    <property type="match status" value="1"/>
</dbReference>
<dbReference type="SUPFAM" id="SSF51283">
    <property type="entry name" value="dUTPase-like"/>
    <property type="match status" value="1"/>
</dbReference>
<reference key="1">
    <citation type="journal article" date="1996" name="J. Biol. Chem.">
        <title>Cloning and identification of rat deoxyuridine triphosphatase as an inhibitor of peroxisome proliferator-activated receptor alpha.</title>
        <authorList>
            <person name="Chu R.Y."/>
            <person name="Lin Y.L."/>
            <person name="Rao M.S."/>
            <person name="Reddy J.K."/>
        </authorList>
    </citation>
    <scope>NUCLEOTIDE SEQUENCE [MRNA]</scope>
    <scope>SUBCELLULAR LOCATION</scope>
    <scope>FUNCTION</scope>
    <source>
        <strain>Sprague-Dawley</strain>
        <tissue>Liver</tissue>
    </source>
</reference>
<reference key="2">
    <citation type="submission" date="1999-09" db="EMBL/GenBank/DDBJ databases">
        <authorList>
            <person name="Chu R.Y."/>
            <person name="Lin Y.L."/>
            <person name="Rao M.S."/>
            <person name="Reddy J.K."/>
        </authorList>
    </citation>
    <scope>SEQUENCE REVISION</scope>
</reference>
<evidence type="ECO:0000250" key="1">
    <source>
        <dbReference type="UniProtKB" id="P33316"/>
    </source>
</evidence>
<evidence type="ECO:0000250" key="2">
    <source>
        <dbReference type="UniProtKB" id="Q9CQ43"/>
    </source>
</evidence>
<evidence type="ECO:0000269" key="3">
    <source>
    </source>
</evidence>
<evidence type="ECO:0000305" key="4"/>
<gene>
    <name type="primary">Dut</name>
    <name type="synonym">Dutp</name>
</gene>
<comment type="function">
    <text evidence="1 2 3">Catalyzes the cleavage of 2'-deoxyuridine 5'-triphosphate (dUTP) into 2'-deoxyuridine 5'-monophosphate (dUMP) and inorganic pyrophosphate and through its action efficiently prevents uracil misincorporation into DNA and at the same time provides dUMP, the substrate for de novo thymidylate biosynthesis (By similarity). Inhibits peroxisome proliferator-activated receptor (PPAR) activity by binding of its N-terminal to PPAR, preventing the latter's dimerization with retinoid X receptor (PubMed:8910358). Essential for embryonic development (By similarity).</text>
</comment>
<comment type="catalytic activity">
    <reaction evidence="1">
        <text>dUTP + H2O = dUMP + diphosphate + H(+)</text>
        <dbReference type="Rhea" id="RHEA:10248"/>
        <dbReference type="ChEBI" id="CHEBI:15377"/>
        <dbReference type="ChEBI" id="CHEBI:15378"/>
        <dbReference type="ChEBI" id="CHEBI:33019"/>
        <dbReference type="ChEBI" id="CHEBI:61555"/>
        <dbReference type="ChEBI" id="CHEBI:246422"/>
        <dbReference type="EC" id="3.6.1.23"/>
    </reaction>
</comment>
<comment type="cofactor">
    <cofactor evidence="1">
        <name>Mg(2+)</name>
        <dbReference type="ChEBI" id="CHEBI:18420"/>
    </cofactor>
</comment>
<comment type="pathway">
    <text evidence="1">Pyrimidine metabolism; dUMP biosynthesis; dUMP from dCTP (dUTP route): step 2/2.</text>
</comment>
<comment type="subunit">
    <text evidence="1">Homotrimer.</text>
</comment>
<comment type="subcellular location">
    <subcellularLocation>
        <location evidence="3">Cytoplasm</location>
    </subcellularLocation>
    <subcellularLocation>
        <location evidence="3">Nucleus</location>
    </subcellularLocation>
    <text evidence="3">Binding to PPAR induces translocation to the nucleus.</text>
</comment>
<comment type="tissue specificity">
    <text>Expressed in all tissues examined. Higher levels in heart and kidney.</text>
</comment>
<comment type="miscellaneous">
    <text>Each trimer binds three substrate molecules. The ligands are bound between subunits, and for each substrate molecule, residues from adjacent subunits contribute to the binding interactions.</text>
</comment>
<comment type="similarity">
    <text evidence="4">Belongs to the dUTPase family.</text>
</comment>
<sequence length="205" mass="22003">MPLLCALLRSRLQPSLLRSLTLTSAQSLSCGGSRGVRTWSARTGPGACADPAVSVSKRARAEDDASLRFVRLSEHATAPTRGSARAAGYDLYSAYDYTIPSMEKALVKTDIQIAVPSGCYGRVAPRSGLAVKHFIDVGAGVIDEDYRGNVGVVLFNFGKEKFEVKKGDRIAQLICERILYPDLEEVQTLDNTERGSGGFGSTGKN</sequence>
<name>DUT_RAT</name>
<protein>
    <recommendedName>
        <fullName>Deoxyuridine 5'-triphosphate nucleotidohydrolase</fullName>
        <shortName>dUTPase</shortName>
        <ecNumber evidence="1">3.6.1.23</ecNumber>
    </recommendedName>
    <alternativeName>
        <fullName>PPAR-interacting protein 4</fullName>
        <shortName>PIP4</shortName>
    </alternativeName>
    <alternativeName>
        <fullName>dUTP pyrophosphatase</fullName>
    </alternativeName>
</protein>
<keyword id="KW-0963">Cytoplasm</keyword>
<keyword id="KW-0378">Hydrolase</keyword>
<keyword id="KW-0460">Magnesium</keyword>
<keyword id="KW-0479">Metal-binding</keyword>
<keyword id="KW-0546">Nucleotide metabolism</keyword>
<keyword id="KW-0539">Nucleus</keyword>
<keyword id="KW-0597">Phosphoprotein</keyword>
<keyword id="KW-1185">Reference proteome</keyword>
<accession>P70583</accession>